<protein>
    <recommendedName>
        <fullName evidence="1">Pyridoxine 5'-phosphate synthase</fullName>
        <shortName evidence="1">PNP synthase</shortName>
        <ecNumber evidence="1">2.6.99.2</ecNumber>
    </recommendedName>
</protein>
<gene>
    <name evidence="1" type="primary">pdxJ</name>
    <name type="ordered locus">CYB_0455</name>
</gene>
<dbReference type="EC" id="2.6.99.2" evidence="1"/>
<dbReference type="EMBL" id="CP000240">
    <property type="protein sequence ID" value="ABD01449.1"/>
    <property type="molecule type" value="Genomic_DNA"/>
</dbReference>
<dbReference type="RefSeq" id="WP_011432110.1">
    <property type="nucleotide sequence ID" value="NC_007776.1"/>
</dbReference>
<dbReference type="SMR" id="Q2JP46"/>
<dbReference type="STRING" id="321332.CYB_0455"/>
<dbReference type="KEGG" id="cyb:CYB_0455"/>
<dbReference type="eggNOG" id="COG0854">
    <property type="taxonomic scope" value="Bacteria"/>
</dbReference>
<dbReference type="HOGENOM" id="CLU_074563_0_0_3"/>
<dbReference type="OrthoDB" id="9806590at2"/>
<dbReference type="UniPathway" id="UPA00244">
    <property type="reaction ID" value="UER00313"/>
</dbReference>
<dbReference type="Proteomes" id="UP000001938">
    <property type="component" value="Chromosome"/>
</dbReference>
<dbReference type="GO" id="GO:0005829">
    <property type="term" value="C:cytosol"/>
    <property type="evidence" value="ECO:0007669"/>
    <property type="project" value="TreeGrafter"/>
</dbReference>
<dbReference type="GO" id="GO:0033856">
    <property type="term" value="F:pyridoxine 5'-phosphate synthase activity"/>
    <property type="evidence" value="ECO:0007669"/>
    <property type="project" value="UniProtKB-EC"/>
</dbReference>
<dbReference type="GO" id="GO:0008615">
    <property type="term" value="P:pyridoxine biosynthetic process"/>
    <property type="evidence" value="ECO:0007669"/>
    <property type="project" value="UniProtKB-UniRule"/>
</dbReference>
<dbReference type="CDD" id="cd00003">
    <property type="entry name" value="PNPsynthase"/>
    <property type="match status" value="1"/>
</dbReference>
<dbReference type="FunFam" id="3.20.20.70:FF:000042">
    <property type="entry name" value="Pyridoxine 5'-phosphate synthase"/>
    <property type="match status" value="1"/>
</dbReference>
<dbReference type="Gene3D" id="3.20.20.70">
    <property type="entry name" value="Aldolase class I"/>
    <property type="match status" value="1"/>
</dbReference>
<dbReference type="HAMAP" id="MF_00279">
    <property type="entry name" value="PdxJ"/>
    <property type="match status" value="1"/>
</dbReference>
<dbReference type="InterPro" id="IPR013785">
    <property type="entry name" value="Aldolase_TIM"/>
</dbReference>
<dbReference type="InterPro" id="IPR004569">
    <property type="entry name" value="PyrdxlP_synth_PdxJ"/>
</dbReference>
<dbReference type="InterPro" id="IPR036130">
    <property type="entry name" value="Pyridoxine-5'_phos_synth"/>
</dbReference>
<dbReference type="NCBIfam" id="TIGR00559">
    <property type="entry name" value="pdxJ"/>
    <property type="match status" value="1"/>
</dbReference>
<dbReference type="NCBIfam" id="NF003623">
    <property type="entry name" value="PRK05265.1-1"/>
    <property type="match status" value="1"/>
</dbReference>
<dbReference type="NCBIfam" id="NF003625">
    <property type="entry name" value="PRK05265.1-3"/>
    <property type="match status" value="1"/>
</dbReference>
<dbReference type="NCBIfam" id="NF003627">
    <property type="entry name" value="PRK05265.1-5"/>
    <property type="match status" value="1"/>
</dbReference>
<dbReference type="PANTHER" id="PTHR30456">
    <property type="entry name" value="PYRIDOXINE 5'-PHOSPHATE SYNTHASE"/>
    <property type="match status" value="1"/>
</dbReference>
<dbReference type="PANTHER" id="PTHR30456:SF0">
    <property type="entry name" value="PYRIDOXINE 5'-PHOSPHATE SYNTHASE"/>
    <property type="match status" value="1"/>
</dbReference>
<dbReference type="Pfam" id="PF03740">
    <property type="entry name" value="PdxJ"/>
    <property type="match status" value="1"/>
</dbReference>
<dbReference type="SUPFAM" id="SSF63892">
    <property type="entry name" value="Pyridoxine 5'-phosphate synthase"/>
    <property type="match status" value="1"/>
</dbReference>
<reference key="1">
    <citation type="journal article" date="2007" name="ISME J.">
        <title>Population level functional diversity in a microbial community revealed by comparative genomic and metagenomic analyses.</title>
        <authorList>
            <person name="Bhaya D."/>
            <person name="Grossman A.R."/>
            <person name="Steunou A.-S."/>
            <person name="Khuri N."/>
            <person name="Cohan F.M."/>
            <person name="Hamamura N."/>
            <person name="Melendrez M.C."/>
            <person name="Bateson M.M."/>
            <person name="Ward D.M."/>
            <person name="Heidelberg J.F."/>
        </authorList>
    </citation>
    <scope>NUCLEOTIDE SEQUENCE [LARGE SCALE GENOMIC DNA]</scope>
    <source>
        <strain>JA-2-3B'a(2-13)</strain>
    </source>
</reference>
<keyword id="KW-0963">Cytoplasm</keyword>
<keyword id="KW-0664">Pyridoxine biosynthesis</keyword>
<keyword id="KW-1185">Reference proteome</keyword>
<keyword id="KW-0808">Transferase</keyword>
<accession>Q2JP46</accession>
<proteinExistence type="inferred from homology"/>
<evidence type="ECO:0000255" key="1">
    <source>
        <dbReference type="HAMAP-Rule" id="MF_00279"/>
    </source>
</evidence>
<name>PDXJ_SYNJB</name>
<feature type="chain" id="PRO_1000022407" description="Pyridoxine 5'-phosphate synthase">
    <location>
        <begin position="1"/>
        <end position="239"/>
    </location>
</feature>
<feature type="active site" description="Proton acceptor" evidence="1">
    <location>
        <position position="43"/>
    </location>
</feature>
<feature type="active site" description="Proton acceptor" evidence="1">
    <location>
        <position position="70"/>
    </location>
</feature>
<feature type="active site" description="Proton donor" evidence="1">
    <location>
        <position position="191"/>
    </location>
</feature>
<feature type="binding site" evidence="1">
    <location>
        <position position="7"/>
    </location>
    <ligand>
        <name>3-amino-2-oxopropyl phosphate</name>
        <dbReference type="ChEBI" id="CHEBI:57279"/>
    </ligand>
</feature>
<feature type="binding site" evidence="1">
    <location>
        <begin position="9"/>
        <end position="10"/>
    </location>
    <ligand>
        <name>1-deoxy-D-xylulose 5-phosphate</name>
        <dbReference type="ChEBI" id="CHEBI:57792"/>
    </ligand>
</feature>
<feature type="binding site" evidence="1">
    <location>
        <position position="18"/>
    </location>
    <ligand>
        <name>3-amino-2-oxopropyl phosphate</name>
        <dbReference type="ChEBI" id="CHEBI:57279"/>
    </ligand>
</feature>
<feature type="binding site" evidence="1">
    <location>
        <position position="45"/>
    </location>
    <ligand>
        <name>1-deoxy-D-xylulose 5-phosphate</name>
        <dbReference type="ChEBI" id="CHEBI:57792"/>
    </ligand>
</feature>
<feature type="binding site" evidence="1">
    <location>
        <position position="50"/>
    </location>
    <ligand>
        <name>1-deoxy-D-xylulose 5-phosphate</name>
        <dbReference type="ChEBI" id="CHEBI:57792"/>
    </ligand>
</feature>
<feature type="binding site" evidence="1">
    <location>
        <position position="100"/>
    </location>
    <ligand>
        <name>1-deoxy-D-xylulose 5-phosphate</name>
        <dbReference type="ChEBI" id="CHEBI:57792"/>
    </ligand>
</feature>
<feature type="binding site" evidence="1">
    <location>
        <position position="192"/>
    </location>
    <ligand>
        <name>3-amino-2-oxopropyl phosphate</name>
        <dbReference type="ChEBI" id="CHEBI:57279"/>
    </ligand>
</feature>
<feature type="binding site" evidence="1">
    <location>
        <begin position="213"/>
        <end position="214"/>
    </location>
    <ligand>
        <name>3-amino-2-oxopropyl phosphate</name>
        <dbReference type="ChEBI" id="CHEBI:57279"/>
    </ligand>
</feature>
<feature type="site" description="Transition state stabilizer" evidence="1">
    <location>
        <position position="151"/>
    </location>
</feature>
<comment type="function">
    <text evidence="1">Catalyzes the complicated ring closure reaction between the two acyclic compounds 1-deoxy-D-xylulose-5-phosphate (DXP) and 3-amino-2-oxopropyl phosphate (1-amino-acetone-3-phosphate or AAP) to form pyridoxine 5'-phosphate (PNP) and inorganic phosphate.</text>
</comment>
<comment type="catalytic activity">
    <reaction evidence="1">
        <text>3-amino-2-oxopropyl phosphate + 1-deoxy-D-xylulose 5-phosphate = pyridoxine 5'-phosphate + phosphate + 2 H2O + H(+)</text>
        <dbReference type="Rhea" id="RHEA:15265"/>
        <dbReference type="ChEBI" id="CHEBI:15377"/>
        <dbReference type="ChEBI" id="CHEBI:15378"/>
        <dbReference type="ChEBI" id="CHEBI:43474"/>
        <dbReference type="ChEBI" id="CHEBI:57279"/>
        <dbReference type="ChEBI" id="CHEBI:57792"/>
        <dbReference type="ChEBI" id="CHEBI:58589"/>
        <dbReference type="EC" id="2.6.99.2"/>
    </reaction>
</comment>
<comment type="pathway">
    <text evidence="1">Cofactor biosynthesis; pyridoxine 5'-phosphate biosynthesis; pyridoxine 5'-phosphate from D-erythrose 4-phosphate: step 5/5.</text>
</comment>
<comment type="subunit">
    <text evidence="1">Homooctamer; tetramer of dimers.</text>
</comment>
<comment type="subcellular location">
    <subcellularLocation>
        <location evidence="1">Cytoplasm</location>
    </subcellularLocation>
</comment>
<comment type="similarity">
    <text evidence="1">Belongs to the PNP synthase family.</text>
</comment>
<organism>
    <name type="scientific">Synechococcus sp. (strain JA-2-3B'a(2-13))</name>
    <name type="common">Cyanobacteria bacterium Yellowstone B-Prime</name>
    <dbReference type="NCBI Taxonomy" id="321332"/>
    <lineage>
        <taxon>Bacteria</taxon>
        <taxon>Bacillati</taxon>
        <taxon>Cyanobacteriota</taxon>
        <taxon>Cyanophyceae</taxon>
        <taxon>Synechococcales</taxon>
        <taxon>Synechococcaceae</taxon>
        <taxon>Synechococcus</taxon>
    </lineage>
</organism>
<sequence>MLSLGVNIDHIATLRQARRTVEPDPVAAAVIAELAGADGITVHLREDRRHIQDRDVRLLRQTVRTHLNLEMAATEEMVAIALEVKPDYVTLVPERREEITTEGGLDVAGQVSRLRDVVGQLQGSGIPVSLFIDPDPTQIAAAAQVGARWVELHTGRYAEASSAAQRQVELDHLEKASQQALQLGLRVNAGHGLTYWNVGPVARIPGMEELNIGHSIISRAVLVGLDRAVREMRQAMGLS</sequence>